<evidence type="ECO:0000250" key="1"/>
<evidence type="ECO:0000305" key="2"/>
<comment type="catalytic activity">
    <reaction>
        <text>a primary alcohol + NAD(+) = an aldehyde + NADH + H(+)</text>
        <dbReference type="Rhea" id="RHEA:10736"/>
        <dbReference type="ChEBI" id="CHEBI:15378"/>
        <dbReference type="ChEBI" id="CHEBI:15734"/>
        <dbReference type="ChEBI" id="CHEBI:17478"/>
        <dbReference type="ChEBI" id="CHEBI:57540"/>
        <dbReference type="ChEBI" id="CHEBI:57945"/>
        <dbReference type="EC" id="1.1.1.1"/>
    </reaction>
</comment>
<comment type="catalytic activity">
    <reaction>
        <text>a secondary alcohol + NAD(+) = a ketone + NADH + H(+)</text>
        <dbReference type="Rhea" id="RHEA:10740"/>
        <dbReference type="ChEBI" id="CHEBI:15378"/>
        <dbReference type="ChEBI" id="CHEBI:17087"/>
        <dbReference type="ChEBI" id="CHEBI:35681"/>
        <dbReference type="ChEBI" id="CHEBI:57540"/>
        <dbReference type="ChEBI" id="CHEBI:57945"/>
        <dbReference type="EC" id="1.1.1.1"/>
    </reaction>
</comment>
<comment type="cofactor">
    <cofactor evidence="1">
        <name>Zn(2+)</name>
        <dbReference type="ChEBI" id="CHEBI:29105"/>
    </cofactor>
    <text evidence="1">Binds 2 Zn(2+) ions per subunit.</text>
</comment>
<comment type="subunit">
    <text>Homodimer.</text>
</comment>
<comment type="subcellular location">
    <subcellularLocation>
        <location>Cytoplasm</location>
    </subcellularLocation>
</comment>
<comment type="similarity">
    <text evidence="2">Belongs to the zinc-containing alcohol dehydrogenase family. Class-I subfamily.</text>
</comment>
<protein>
    <recommendedName>
        <fullName>Alcohol dehydrogenase 1</fullName>
        <ecNumber>1.1.1.1</ecNumber>
    </recommendedName>
</protein>
<name>ADH1_ANAPL</name>
<reference key="1">
    <citation type="journal article" date="1992" name="Eur. J. Biochem.">
        <title>Estrogen induction of alcohol dehydrogenase in the uropygial gland of mallard ducks.</title>
        <authorList>
            <person name="Hiremath L.S."/>
            <person name="Kessler P.M."/>
            <person name="Sasaki G.C."/>
            <person name="Kolattukudy P.E."/>
        </authorList>
    </citation>
    <scope>NUCLEOTIDE SEQUENCE [MRNA]</scope>
    <source>
        <tissue>Uropygial gland</tissue>
    </source>
</reference>
<gene>
    <name type="primary">ADH1</name>
</gene>
<dbReference type="EC" id="1.1.1.1"/>
<dbReference type="EMBL" id="X63948">
    <property type="protein sequence ID" value="CAA45373.1"/>
    <property type="molecule type" value="mRNA"/>
</dbReference>
<dbReference type="PIR" id="S20593">
    <property type="entry name" value="S20593"/>
</dbReference>
<dbReference type="SMR" id="P30350"/>
<dbReference type="Proteomes" id="UP000694400">
    <property type="component" value="Unplaced"/>
</dbReference>
<dbReference type="GO" id="GO:0005829">
    <property type="term" value="C:cytosol"/>
    <property type="evidence" value="ECO:0007669"/>
    <property type="project" value="TreeGrafter"/>
</dbReference>
<dbReference type="GO" id="GO:0004745">
    <property type="term" value="F:all-trans-retinol dehydrogenase (NAD+) activity"/>
    <property type="evidence" value="ECO:0007669"/>
    <property type="project" value="TreeGrafter"/>
</dbReference>
<dbReference type="GO" id="GO:0008270">
    <property type="term" value="F:zinc ion binding"/>
    <property type="evidence" value="ECO:0007669"/>
    <property type="project" value="TreeGrafter"/>
</dbReference>
<dbReference type="GO" id="GO:0042573">
    <property type="term" value="P:retinoic acid metabolic process"/>
    <property type="evidence" value="ECO:0007669"/>
    <property type="project" value="TreeGrafter"/>
</dbReference>
<dbReference type="GO" id="GO:0042572">
    <property type="term" value="P:retinol metabolic process"/>
    <property type="evidence" value="ECO:0007669"/>
    <property type="project" value="TreeGrafter"/>
</dbReference>
<dbReference type="FunFam" id="3.40.50.720:FF:000003">
    <property type="entry name" value="S-(hydroxymethyl)glutathione dehydrogenase"/>
    <property type="match status" value="1"/>
</dbReference>
<dbReference type="Gene3D" id="3.40.50.720">
    <property type="entry name" value="NAD(P)-binding Rossmann-like Domain"/>
    <property type="match status" value="1"/>
</dbReference>
<dbReference type="InterPro" id="IPR013149">
    <property type="entry name" value="ADH-like_C"/>
</dbReference>
<dbReference type="InterPro" id="IPR011032">
    <property type="entry name" value="GroES-like_sf"/>
</dbReference>
<dbReference type="InterPro" id="IPR036291">
    <property type="entry name" value="NAD(P)-bd_dom_sf"/>
</dbReference>
<dbReference type="PANTHER" id="PTHR43880">
    <property type="entry name" value="ALCOHOL DEHYDROGENASE"/>
    <property type="match status" value="1"/>
</dbReference>
<dbReference type="PANTHER" id="PTHR43880:SF1">
    <property type="entry name" value="ALCOHOL DEHYDROGENASE 1A"/>
    <property type="match status" value="1"/>
</dbReference>
<dbReference type="Pfam" id="PF00107">
    <property type="entry name" value="ADH_zinc_N"/>
    <property type="match status" value="1"/>
</dbReference>
<dbReference type="SUPFAM" id="SSF50129">
    <property type="entry name" value="GroES-like"/>
    <property type="match status" value="1"/>
</dbReference>
<dbReference type="SUPFAM" id="SSF51735">
    <property type="entry name" value="NAD(P)-binding Rossmann-fold domains"/>
    <property type="match status" value="1"/>
</dbReference>
<keyword id="KW-0963">Cytoplasm</keyword>
<keyword id="KW-0479">Metal-binding</keyword>
<keyword id="KW-0520">NAD</keyword>
<keyword id="KW-0560">Oxidoreductase</keyword>
<keyword id="KW-0862">Zinc</keyword>
<accession>P30350</accession>
<feature type="chain" id="PRO_0000160670" description="Alcohol dehydrogenase 1">
    <location>
        <begin position="1" status="less than"/>
        <end position="185"/>
    </location>
</feature>
<feature type="binding site" evidence="1">
    <location>
        <begin position="10"/>
        <end position="15"/>
    </location>
    <ligand>
        <name>NAD(+)</name>
        <dbReference type="ChEBI" id="CHEBI:57540"/>
    </ligand>
</feature>
<feature type="binding site" evidence="1">
    <location>
        <position position="34"/>
    </location>
    <ligand>
        <name>NAD(+)</name>
        <dbReference type="ChEBI" id="CHEBI:57540"/>
    </ligand>
</feature>
<feature type="binding site" evidence="1">
    <location>
        <position position="39"/>
    </location>
    <ligand>
        <name>NAD(+)</name>
        <dbReference type="ChEBI" id="CHEBI:57540"/>
    </ligand>
</feature>
<feature type="binding site" evidence="1">
    <location>
        <begin position="103"/>
        <end position="105"/>
    </location>
    <ligand>
        <name>NAD(+)</name>
        <dbReference type="ChEBI" id="CHEBI:57540"/>
    </ligand>
</feature>
<feature type="binding site" evidence="1">
    <location>
        <position position="180"/>
    </location>
    <ligand>
        <name>NAD(+)</name>
        <dbReference type="ChEBI" id="CHEBI:57540"/>
    </ligand>
</feature>
<feature type="non-terminal residue">
    <location>
        <position position="1"/>
    </location>
</feature>
<proteinExistence type="evidence at transcript level"/>
<organism>
    <name type="scientific">Anas platyrhynchos</name>
    <name type="common">Mallard</name>
    <name type="synonym">Anas boschas</name>
    <dbReference type="NCBI Taxonomy" id="8839"/>
    <lineage>
        <taxon>Eukaryota</taxon>
        <taxon>Metazoa</taxon>
        <taxon>Chordata</taxon>
        <taxon>Craniata</taxon>
        <taxon>Vertebrata</taxon>
        <taxon>Euteleostomi</taxon>
        <taxon>Archelosauria</taxon>
        <taxon>Archosauria</taxon>
        <taxon>Dinosauria</taxon>
        <taxon>Saurischia</taxon>
        <taxon>Theropoda</taxon>
        <taxon>Coelurosauria</taxon>
        <taxon>Aves</taxon>
        <taxon>Neognathae</taxon>
        <taxon>Galloanserae</taxon>
        <taxon>Anseriformes</taxon>
        <taxon>Anatidae</taxon>
        <taxon>Anatinae</taxon>
        <taxon>Anas</taxon>
    </lineage>
</organism>
<sequence>ARGSTCAVFGLGGVGLSVIMGCKAAGASRIIAVDINSDKFAKAKELGATDCINPKDHKEPIHKVLIGMTGYGVDYSFEVIGRIETMVAALASCHYNYGVSVIVGVPPAAQNITFDPMLLFSGRTWKGSVFGGWKSKDSVPKLVADYMKKKFVLDPLITHTLPFSKINEGFDLLRAGKSIRSVLTF</sequence>